<sequence>METVQLRNPPRRQLKKLDEDSLTKQPEEVFDVLEKLGEGSYGSVYKAIHKETGQIVAIKQVPVESDLQEIIKEISIMQQCDSPHVVKYYGSYFKNTDLWIVMEYCGAGSVSDIIRLRNKTLTEDEIATVLQSTLKGLEYLHFMRKIHRDIKAGNILLNTEGHAKLADFGVAGQLTDTMAKRNTVIGTPFWMAPEVIQEIGYNCVADIWSLGITAIEMAEGKPPYADIHPMRAIFMIPTNPPPTFRKPELWSDNFTDFVKQCLVKSPEQRATATQLLQHPFVKSAKGVSILRDLINEAMDVKLKRQESQQREVDQDDEENSEEDEMDSGTMVRAVGDEMGTVRVASTMTDGANTMIEHDDTLPSQLGTMVINTEDEEEEGTMKRRDETMQPAKPSFLEYFEQKEKENQINSFGKSVPGPLKNSSDWKIPQDGDYEFLKSWTVEDLQKRLLALDPMMEQEIEEIRQKYQSKRQPILDAIEAKKRRQQNF</sequence>
<name>STK4_COLGU</name>
<evidence type="ECO:0000250" key="1"/>
<evidence type="ECO:0000250" key="2">
    <source>
        <dbReference type="UniProtKB" id="Q13043"/>
    </source>
</evidence>
<evidence type="ECO:0000250" key="3">
    <source>
        <dbReference type="UniProtKB" id="Q9JI11"/>
    </source>
</evidence>
<evidence type="ECO:0000255" key="4"/>
<evidence type="ECO:0000255" key="5">
    <source>
        <dbReference type="PROSITE-ProRule" id="PRU00159"/>
    </source>
</evidence>
<evidence type="ECO:0000255" key="6">
    <source>
        <dbReference type="PROSITE-ProRule" id="PRU00310"/>
    </source>
</evidence>
<evidence type="ECO:0000256" key="7">
    <source>
        <dbReference type="SAM" id="MobiDB-lite"/>
    </source>
</evidence>
<evidence type="ECO:0000305" key="8"/>
<reference key="1">
    <citation type="journal article" date="2007" name="Genome Res.">
        <title>Comparative sequence analyses reveal rapid and divergent evolutionary changes of the WFDC locus in the primate lineage.</title>
        <authorList>
            <consortium name="NISC comparative sequencing program"/>
            <person name="Hurle B."/>
            <person name="Swanson W."/>
            <person name="Green E.D."/>
        </authorList>
    </citation>
    <scope>NUCLEOTIDE SEQUENCE [GENOMIC DNA]</scope>
</reference>
<organism>
    <name type="scientific">Colobus guereza</name>
    <name type="common">Mantled guereza</name>
    <name type="synonym">Eastern black-and-white colobus monkey</name>
    <dbReference type="NCBI Taxonomy" id="33548"/>
    <lineage>
        <taxon>Eukaryota</taxon>
        <taxon>Metazoa</taxon>
        <taxon>Chordata</taxon>
        <taxon>Craniata</taxon>
        <taxon>Vertebrata</taxon>
        <taxon>Euteleostomi</taxon>
        <taxon>Mammalia</taxon>
        <taxon>Eutheria</taxon>
        <taxon>Euarchontoglires</taxon>
        <taxon>Primates</taxon>
        <taxon>Haplorrhini</taxon>
        <taxon>Catarrhini</taxon>
        <taxon>Cercopithecidae</taxon>
        <taxon>Colobinae</taxon>
        <taxon>Colobus</taxon>
    </lineage>
</organism>
<feature type="chain" id="PRO_0000289629" description="Serine/threonine-protein kinase 4">
    <location>
        <begin position="1"/>
        <end position="487"/>
    </location>
</feature>
<feature type="chain" id="PRO_0000413733" description="Serine/threonine-protein kinase 4 37kDa subunit" evidence="1">
    <location>
        <begin position="1"/>
        <end position="326"/>
    </location>
</feature>
<feature type="chain" id="PRO_0000413734" description="Serine/threonine-protein kinase 4 18kDa subunit" evidence="1">
    <location>
        <begin position="327"/>
        <end position="487"/>
    </location>
</feature>
<feature type="domain" description="Protein kinase" evidence="5">
    <location>
        <begin position="30"/>
        <end position="281"/>
    </location>
</feature>
<feature type="domain" description="SARAH" evidence="6">
    <location>
        <begin position="433"/>
        <end position="480"/>
    </location>
</feature>
<feature type="region of interest" description="Disordered" evidence="7">
    <location>
        <begin position="303"/>
        <end position="332"/>
    </location>
</feature>
<feature type="coiled-coil region" evidence="4">
    <location>
        <begin position="290"/>
        <end position="310"/>
    </location>
</feature>
<feature type="compositionally biased region" description="Basic and acidic residues" evidence="7">
    <location>
        <begin position="303"/>
        <end position="312"/>
    </location>
</feature>
<feature type="compositionally biased region" description="Acidic residues" evidence="7">
    <location>
        <begin position="313"/>
        <end position="326"/>
    </location>
</feature>
<feature type="active site" description="Proton acceptor" evidence="5">
    <location>
        <position position="149"/>
    </location>
</feature>
<feature type="binding site" evidence="5">
    <location>
        <begin position="36"/>
        <end position="44"/>
    </location>
    <ligand>
        <name>ATP</name>
        <dbReference type="ChEBI" id="CHEBI:30616"/>
    </ligand>
</feature>
<feature type="binding site" evidence="5">
    <location>
        <position position="59"/>
    </location>
    <ligand>
        <name>ATP</name>
        <dbReference type="ChEBI" id="CHEBI:30616"/>
    </ligand>
</feature>
<feature type="site" description="Cleavage; by caspase-3" evidence="1">
    <location>
        <begin position="326"/>
        <end position="327"/>
    </location>
</feature>
<feature type="site" description="Cleavage; by caspase-3" evidence="1">
    <location>
        <begin position="349"/>
        <end position="350"/>
    </location>
</feature>
<feature type="modified residue" description="N-acetylmethionine" evidence="2">
    <location>
        <position position="1"/>
    </location>
</feature>
<feature type="modified residue" description="Phosphothreonine" evidence="2">
    <location>
        <position position="3"/>
    </location>
</feature>
<feature type="modified residue" description="Phosphothreonine; by autocatalysis" evidence="2">
    <location>
        <position position="183"/>
    </location>
</feature>
<feature type="modified residue" description="Phosphoserine" evidence="2">
    <location>
        <position position="265"/>
    </location>
</feature>
<feature type="modified residue" description="Phosphoserine" evidence="2">
    <location>
        <position position="320"/>
    </location>
</feature>
<feature type="modified residue" description="Phosphothreonine" evidence="2">
    <location>
        <position position="340"/>
    </location>
</feature>
<feature type="modified residue" description="Phosphothreonine" evidence="2">
    <location>
        <position position="367"/>
    </location>
</feature>
<feature type="modified residue" description="Phosphothreonine; by PKB/AKT1" evidence="2">
    <location>
        <position position="387"/>
    </location>
</feature>
<feature type="modified residue" description="Phosphoserine" evidence="2">
    <location>
        <position position="410"/>
    </location>
</feature>
<feature type="modified residue" description="Phosphoserine" evidence="2">
    <location>
        <position position="414"/>
    </location>
</feature>
<feature type="modified residue" description="Phosphotyrosine" evidence="3">
    <location>
        <position position="433"/>
    </location>
</feature>
<dbReference type="EC" id="2.7.11.1"/>
<dbReference type="EMBL" id="DP000038">
    <property type="protein sequence ID" value="ABO52930.1"/>
    <property type="molecule type" value="Genomic_DNA"/>
</dbReference>
<dbReference type="SMR" id="A4K2P5"/>
<dbReference type="GO" id="GO:0005737">
    <property type="term" value="C:cytoplasm"/>
    <property type="evidence" value="ECO:0000250"/>
    <property type="project" value="UniProtKB"/>
</dbReference>
<dbReference type="GO" id="GO:0005634">
    <property type="term" value="C:nucleus"/>
    <property type="evidence" value="ECO:0000250"/>
    <property type="project" value="UniProtKB"/>
</dbReference>
<dbReference type="GO" id="GO:0005524">
    <property type="term" value="F:ATP binding"/>
    <property type="evidence" value="ECO:0007669"/>
    <property type="project" value="UniProtKB-KW"/>
</dbReference>
<dbReference type="GO" id="GO:0046872">
    <property type="term" value="F:metal ion binding"/>
    <property type="evidence" value="ECO:0007669"/>
    <property type="project" value="UniProtKB-KW"/>
</dbReference>
<dbReference type="GO" id="GO:0106310">
    <property type="term" value="F:protein serine kinase activity"/>
    <property type="evidence" value="ECO:0007669"/>
    <property type="project" value="RHEA"/>
</dbReference>
<dbReference type="GO" id="GO:0004674">
    <property type="term" value="F:protein serine/threonine kinase activity"/>
    <property type="evidence" value="ECO:0000250"/>
    <property type="project" value="UniProtKB"/>
</dbReference>
<dbReference type="GO" id="GO:0006915">
    <property type="term" value="P:apoptotic process"/>
    <property type="evidence" value="ECO:0000250"/>
    <property type="project" value="UniProtKB"/>
</dbReference>
<dbReference type="GO" id="GO:0035329">
    <property type="term" value="P:hippo signaling"/>
    <property type="evidence" value="ECO:0000250"/>
    <property type="project" value="UniProtKB"/>
</dbReference>
<dbReference type="GO" id="GO:0051262">
    <property type="term" value="P:protein tetramerization"/>
    <property type="evidence" value="ECO:0007669"/>
    <property type="project" value="InterPro"/>
</dbReference>
<dbReference type="CDD" id="cd21887">
    <property type="entry name" value="SARAH_MST1"/>
    <property type="match status" value="1"/>
</dbReference>
<dbReference type="CDD" id="cd06612">
    <property type="entry name" value="STKc_MST1_2"/>
    <property type="match status" value="1"/>
</dbReference>
<dbReference type="FunFam" id="1.10.510.10:FF:000075">
    <property type="entry name" value="Serine/threonine-protein kinase 3"/>
    <property type="match status" value="1"/>
</dbReference>
<dbReference type="FunFam" id="3.30.200.20:FF:000410">
    <property type="entry name" value="Serine/threonine-protein kinase 3"/>
    <property type="match status" value="1"/>
</dbReference>
<dbReference type="FunFam" id="4.10.170.10:FF:000002">
    <property type="entry name" value="serine/threonine-protein kinase 3"/>
    <property type="match status" value="1"/>
</dbReference>
<dbReference type="FunFam" id="1.10.287.4270:FF:000004">
    <property type="entry name" value="Serine/threonine-protein kinase 3/4"/>
    <property type="match status" value="1"/>
</dbReference>
<dbReference type="FunFam" id="1.10.287.4270:FF:000002">
    <property type="entry name" value="Serine/threonine-protein kinase 4"/>
    <property type="match status" value="1"/>
</dbReference>
<dbReference type="Gene3D" id="1.10.287.4270">
    <property type="match status" value="1"/>
</dbReference>
<dbReference type="Gene3D" id="4.10.170.10">
    <property type="entry name" value="p53-like tetramerisation domain"/>
    <property type="match status" value="1"/>
</dbReference>
<dbReference type="Gene3D" id="1.10.510.10">
    <property type="entry name" value="Transferase(Phosphotransferase) domain 1"/>
    <property type="match status" value="1"/>
</dbReference>
<dbReference type="InterPro" id="IPR011009">
    <property type="entry name" value="Kinase-like_dom_sf"/>
</dbReference>
<dbReference type="InterPro" id="IPR024205">
    <property type="entry name" value="Mst1_2_SARAH_domain"/>
</dbReference>
<dbReference type="InterPro" id="IPR036674">
    <property type="entry name" value="p53_tetramer_sf"/>
</dbReference>
<dbReference type="InterPro" id="IPR000719">
    <property type="entry name" value="Prot_kinase_dom"/>
</dbReference>
<dbReference type="InterPro" id="IPR017441">
    <property type="entry name" value="Protein_kinase_ATP_BS"/>
</dbReference>
<dbReference type="InterPro" id="IPR011524">
    <property type="entry name" value="SARAH_dom"/>
</dbReference>
<dbReference type="InterPro" id="IPR050629">
    <property type="entry name" value="STE20/SPS1-PAK"/>
</dbReference>
<dbReference type="PANTHER" id="PTHR48012:SF2">
    <property type="entry name" value="STERILE20-LIKE KINASE, ISOFORM B"/>
    <property type="match status" value="1"/>
</dbReference>
<dbReference type="PANTHER" id="PTHR48012">
    <property type="entry name" value="STERILE20-LIKE KINASE, ISOFORM B-RELATED"/>
    <property type="match status" value="1"/>
</dbReference>
<dbReference type="Pfam" id="PF11629">
    <property type="entry name" value="Mst1_SARAH"/>
    <property type="match status" value="1"/>
</dbReference>
<dbReference type="Pfam" id="PF00069">
    <property type="entry name" value="Pkinase"/>
    <property type="match status" value="1"/>
</dbReference>
<dbReference type="SMART" id="SM00220">
    <property type="entry name" value="S_TKc"/>
    <property type="match status" value="1"/>
</dbReference>
<dbReference type="SUPFAM" id="SSF56112">
    <property type="entry name" value="Protein kinase-like (PK-like)"/>
    <property type="match status" value="1"/>
</dbReference>
<dbReference type="PROSITE" id="PS00107">
    <property type="entry name" value="PROTEIN_KINASE_ATP"/>
    <property type="match status" value="1"/>
</dbReference>
<dbReference type="PROSITE" id="PS50011">
    <property type="entry name" value="PROTEIN_KINASE_DOM"/>
    <property type="match status" value="1"/>
</dbReference>
<dbReference type="PROSITE" id="PS50951">
    <property type="entry name" value="SARAH"/>
    <property type="match status" value="1"/>
</dbReference>
<comment type="function">
    <text evidence="2 3">Stress-activated, pro-apoptotic kinase which, following caspase-cleavage, enters the nucleus and induces chromatin condensation followed by internucleosomal DNA fragmentation. Key component of the Hippo signaling pathway which plays a pivotal role in organ size control and tumor suppression by restricting proliferation and promoting apoptosis. The core of this pathway is composed of a kinase cascade wherein STK3/MST2 and STK4/MST1, in complex with its regulatory protein SAV1, phosphorylates and activates LATS1/2 in complex with its regulatory protein MOB1, which in turn phosphorylates and inactivates YAP1 oncoprotein and WWTR1/TAZ. Phosphorylation of YAP1 by LATS2 inhibits its translocation into the nucleus to regulate cellular genes important for cell proliferation, cell death, and cell migration. STK3/MST2 and STK4/MST1 are required to repress proliferation of mature hepatocytes, to prevent activation of facultative adult liver stem cells (oval cells), and to inhibit tumor formation. Phosphorylates 'Ser-14' of histone H2B (H2BS14ph) during apoptosis. Phosphorylates FOXO3 upon oxidative stress, which results in its nuclear translocation and cell death initiation. Phosphorylates MOBKL1A, MOBKL1B and RASSF2. Phosphorylates TNNI3 (cardiac Tn-I) and alters its binding affinity to TNNC1 (cardiac Tn-C) and TNNT2 (cardiac Tn-T). Phosphorylates FOXO1 on 'Ser-212' and regulates its activation and stimulates transcription of PMAIP1 in a FOXO1-dependent manner. Phosphorylates SIRT1 and inhibits SIRT1-mediated p53/TP53 deacetylation, thereby promoting p53/TP53 dependent transcription and apoptosis upon DNA damage. Acts as an inhibitor of PKB/AKT1. Phosphorylates AR on 'Ser-650' and suppresses its activity by intersecting with PKB/AKT1 signaling and antagonizing formation of AR-chromatin complexes.</text>
</comment>
<comment type="catalytic activity">
    <reaction evidence="2">
        <text>L-seryl-[protein] + ATP = O-phospho-L-seryl-[protein] + ADP + H(+)</text>
        <dbReference type="Rhea" id="RHEA:17989"/>
        <dbReference type="Rhea" id="RHEA-COMP:9863"/>
        <dbReference type="Rhea" id="RHEA-COMP:11604"/>
        <dbReference type="ChEBI" id="CHEBI:15378"/>
        <dbReference type="ChEBI" id="CHEBI:29999"/>
        <dbReference type="ChEBI" id="CHEBI:30616"/>
        <dbReference type="ChEBI" id="CHEBI:83421"/>
        <dbReference type="ChEBI" id="CHEBI:456216"/>
        <dbReference type="EC" id="2.7.11.1"/>
    </reaction>
    <physiologicalReaction direction="left-to-right" evidence="2">
        <dbReference type="Rhea" id="RHEA:17990"/>
    </physiologicalReaction>
</comment>
<comment type="catalytic activity">
    <reaction evidence="2">
        <text>L-threonyl-[protein] + ATP = O-phospho-L-threonyl-[protein] + ADP + H(+)</text>
        <dbReference type="Rhea" id="RHEA:46608"/>
        <dbReference type="Rhea" id="RHEA-COMP:11060"/>
        <dbReference type="Rhea" id="RHEA-COMP:11605"/>
        <dbReference type="ChEBI" id="CHEBI:15378"/>
        <dbReference type="ChEBI" id="CHEBI:30013"/>
        <dbReference type="ChEBI" id="CHEBI:30616"/>
        <dbReference type="ChEBI" id="CHEBI:61977"/>
        <dbReference type="ChEBI" id="CHEBI:456216"/>
        <dbReference type="EC" id="2.7.11.1"/>
    </reaction>
    <physiologicalReaction direction="left-to-right" evidence="2">
        <dbReference type="Rhea" id="RHEA:46609"/>
    </physiologicalReaction>
</comment>
<comment type="cofactor">
    <cofactor evidence="1">
        <name>Mg(2+)</name>
        <dbReference type="ChEBI" id="CHEBI:18420"/>
    </cofactor>
</comment>
<comment type="activity regulation">
    <text evidence="1">Inhibited by the C-terminal non-catalytic region. Activated by caspase-cleavage. Full activation also requires homodimerization and autophosphorylation of Thr-183. Activated by RASSF1 which acts by preventing its dephosphorylation (By similarity).</text>
</comment>
<comment type="subunit">
    <text evidence="2">Homodimer; mediated via the coiled-coil region. Interacts with NORE1, which inhibits autoactivation. Interacts with and stabilizes SAV1. Interacts with RASSF1. Interacts with FOXO3. Interacts with RASSF2 (via SARAH domain). Interacts with AR, PKB/AKT1, TNNI3 and SIRT1. Interacts with DLG5 (via PDZ domain 3). Interacts with MARK3 and SCRIB in the presence of DLG5.</text>
</comment>
<comment type="subcellular location">
    <subcellularLocation>
        <location evidence="1">Cytoplasm</location>
    </subcellularLocation>
    <subcellularLocation>
        <location evidence="1">Nucleus</location>
    </subcellularLocation>
    <text evidence="1">The caspase-cleaved form cycles between the nucleus and cytoplasm.</text>
</comment>
<comment type="PTM">
    <text evidence="2">Autophosphorylated on serine and threonine residues. Phosphorylation at Thr-387 by PKB/AKT1, leads to inhibition of its: kinase activity, nuclear translocation and autophosphorylation at Thr-183. It also diminishes its cleavage by caspases and its ability to phosphorylate FOXO3 (By similarity).</text>
</comment>
<comment type="PTM">
    <text evidence="1">Proteolytically cleaved by caspase-3 during apoptosis at Asp-326 and Asp-349 resulting in a 37 kDa or a 39 kDa subunit respectively. The 39 kDa subunit is further cleaved into the 37 kDa form. Proteolytic cleavage results in kinase activation and nuclear translocation of the truncated form (MST1/N). It is less likely that cleavage at Asp-349 is a prerequisite for activation as this site is not conserved in the murine ortholog (By similarity).</text>
</comment>
<comment type="similarity">
    <text evidence="8">Belongs to the protein kinase superfamily. STE Ser/Thr protein kinase family. STE20 subfamily.</text>
</comment>
<gene>
    <name type="primary">STK4</name>
</gene>
<keyword id="KW-0007">Acetylation</keyword>
<keyword id="KW-0053">Apoptosis</keyword>
<keyword id="KW-0067">ATP-binding</keyword>
<keyword id="KW-0175">Coiled coil</keyword>
<keyword id="KW-0963">Cytoplasm</keyword>
<keyword id="KW-0418">Kinase</keyword>
<keyword id="KW-0460">Magnesium</keyword>
<keyword id="KW-0479">Metal-binding</keyword>
<keyword id="KW-0547">Nucleotide-binding</keyword>
<keyword id="KW-0539">Nucleus</keyword>
<keyword id="KW-0597">Phosphoprotein</keyword>
<keyword id="KW-0723">Serine/threonine-protein kinase</keyword>
<keyword id="KW-0808">Transferase</keyword>
<accession>A4K2P5</accession>
<protein>
    <recommendedName>
        <fullName>Serine/threonine-protein kinase 4</fullName>
        <ecNumber>2.7.11.1</ecNumber>
    </recommendedName>
    <component>
        <recommendedName>
            <fullName>Serine/threonine-protein kinase 4 37kDa subunit</fullName>
            <shortName>MST1/N</shortName>
        </recommendedName>
    </component>
    <component>
        <recommendedName>
            <fullName>Serine/threonine-protein kinase 4 18kDa subunit</fullName>
            <shortName>MST1/C</shortName>
        </recommendedName>
    </component>
</protein>
<proteinExistence type="inferred from homology"/>